<accession>Q8Y6C0</accession>
<proteinExistence type="inferred from homology"/>
<dbReference type="EC" id="6.3.5.3" evidence="1"/>
<dbReference type="EC" id="3.5.1.2" evidence="1"/>
<dbReference type="EMBL" id="AL591981">
    <property type="protein sequence ID" value="CAC99848.1"/>
    <property type="molecule type" value="Genomic_DNA"/>
</dbReference>
<dbReference type="PIR" id="AB1296">
    <property type="entry name" value="AB1296"/>
</dbReference>
<dbReference type="RefSeq" id="NP_465295.1">
    <property type="nucleotide sequence ID" value="NC_003210.1"/>
</dbReference>
<dbReference type="RefSeq" id="WP_003733240.1">
    <property type="nucleotide sequence ID" value="NZ_CP149495.1"/>
</dbReference>
<dbReference type="SMR" id="Q8Y6C0"/>
<dbReference type="STRING" id="169963.gene:17594452"/>
<dbReference type="PaxDb" id="169963-lmo1770"/>
<dbReference type="EnsemblBacteria" id="CAC99848">
    <property type="protein sequence ID" value="CAC99848"/>
    <property type="gene ID" value="CAC99848"/>
</dbReference>
<dbReference type="GeneID" id="985306"/>
<dbReference type="KEGG" id="lmo:lmo1770"/>
<dbReference type="PATRIC" id="fig|169963.11.peg.1814"/>
<dbReference type="eggNOG" id="COG0047">
    <property type="taxonomic scope" value="Bacteria"/>
</dbReference>
<dbReference type="HOGENOM" id="CLU_001031_3_1_9"/>
<dbReference type="OrthoDB" id="9804441at2"/>
<dbReference type="PhylomeDB" id="Q8Y6C0"/>
<dbReference type="BioCyc" id="LMON169963:LMO1770-MONOMER"/>
<dbReference type="UniPathway" id="UPA00074">
    <property type="reaction ID" value="UER00128"/>
</dbReference>
<dbReference type="Proteomes" id="UP000000817">
    <property type="component" value="Chromosome"/>
</dbReference>
<dbReference type="GO" id="GO:0005737">
    <property type="term" value="C:cytoplasm"/>
    <property type="evidence" value="ECO:0007669"/>
    <property type="project" value="UniProtKB-SubCell"/>
</dbReference>
<dbReference type="GO" id="GO:0005524">
    <property type="term" value="F:ATP binding"/>
    <property type="evidence" value="ECO:0007669"/>
    <property type="project" value="UniProtKB-KW"/>
</dbReference>
<dbReference type="GO" id="GO:0004359">
    <property type="term" value="F:glutaminase activity"/>
    <property type="evidence" value="ECO:0007669"/>
    <property type="project" value="UniProtKB-EC"/>
</dbReference>
<dbReference type="GO" id="GO:0004642">
    <property type="term" value="F:phosphoribosylformylglycinamidine synthase activity"/>
    <property type="evidence" value="ECO:0007669"/>
    <property type="project" value="UniProtKB-UniRule"/>
</dbReference>
<dbReference type="GO" id="GO:0006189">
    <property type="term" value="P:'de novo' IMP biosynthetic process"/>
    <property type="evidence" value="ECO:0007669"/>
    <property type="project" value="UniProtKB-UniRule"/>
</dbReference>
<dbReference type="CDD" id="cd01740">
    <property type="entry name" value="GATase1_FGAR_AT"/>
    <property type="match status" value="1"/>
</dbReference>
<dbReference type="FunFam" id="3.40.50.880:FF:000019">
    <property type="entry name" value="Phosphoribosylformylglycinamidine synthase subunit PurQ"/>
    <property type="match status" value="1"/>
</dbReference>
<dbReference type="Gene3D" id="3.40.50.880">
    <property type="match status" value="1"/>
</dbReference>
<dbReference type="HAMAP" id="MF_00421">
    <property type="entry name" value="PurQ"/>
    <property type="match status" value="1"/>
</dbReference>
<dbReference type="InterPro" id="IPR029062">
    <property type="entry name" value="Class_I_gatase-like"/>
</dbReference>
<dbReference type="InterPro" id="IPR010075">
    <property type="entry name" value="PRibForGlyAmidine_synth_PurQ"/>
</dbReference>
<dbReference type="NCBIfam" id="TIGR01737">
    <property type="entry name" value="FGAM_synth_I"/>
    <property type="match status" value="1"/>
</dbReference>
<dbReference type="NCBIfam" id="NF002957">
    <property type="entry name" value="PRK03619.1"/>
    <property type="match status" value="1"/>
</dbReference>
<dbReference type="PANTHER" id="PTHR47552">
    <property type="entry name" value="PHOSPHORIBOSYLFORMYLGLYCINAMIDINE SYNTHASE SUBUNIT PURQ"/>
    <property type="match status" value="1"/>
</dbReference>
<dbReference type="PANTHER" id="PTHR47552:SF1">
    <property type="entry name" value="PHOSPHORIBOSYLFORMYLGLYCINAMIDINE SYNTHASE SUBUNIT PURQ"/>
    <property type="match status" value="1"/>
</dbReference>
<dbReference type="Pfam" id="PF13507">
    <property type="entry name" value="GATase_5"/>
    <property type="match status" value="1"/>
</dbReference>
<dbReference type="PIRSF" id="PIRSF001586">
    <property type="entry name" value="FGAM_synth_I"/>
    <property type="match status" value="1"/>
</dbReference>
<dbReference type="SMART" id="SM01211">
    <property type="entry name" value="GATase_5"/>
    <property type="match status" value="1"/>
</dbReference>
<dbReference type="SUPFAM" id="SSF52317">
    <property type="entry name" value="Class I glutamine amidotransferase-like"/>
    <property type="match status" value="1"/>
</dbReference>
<dbReference type="PROSITE" id="PS51273">
    <property type="entry name" value="GATASE_TYPE_1"/>
    <property type="match status" value="1"/>
</dbReference>
<evidence type="ECO:0000255" key="1">
    <source>
        <dbReference type="HAMAP-Rule" id="MF_00421"/>
    </source>
</evidence>
<gene>
    <name evidence="1" type="primary">purQ</name>
    <name type="synonym">purL</name>
    <name type="ordered locus">lmo1770</name>
</gene>
<name>PURQ_LISMO</name>
<comment type="function">
    <text evidence="1">Part of the phosphoribosylformylglycinamidine synthase complex involved in the purines biosynthetic pathway. Catalyzes the ATP-dependent conversion of formylglycinamide ribonucleotide (FGAR) and glutamine to yield formylglycinamidine ribonucleotide (FGAM) and glutamate. The FGAM synthase complex is composed of three subunits. PurQ produces an ammonia molecule by converting glutamine to glutamate. PurL transfers the ammonia molecule to FGAR to form FGAM in an ATP-dependent manner. PurS interacts with PurQ and PurL and is thought to assist in the transfer of the ammonia molecule from PurQ to PurL.</text>
</comment>
<comment type="catalytic activity">
    <reaction evidence="1">
        <text>N(2)-formyl-N(1)-(5-phospho-beta-D-ribosyl)glycinamide + L-glutamine + ATP + H2O = 2-formamido-N(1)-(5-O-phospho-beta-D-ribosyl)acetamidine + L-glutamate + ADP + phosphate + H(+)</text>
        <dbReference type="Rhea" id="RHEA:17129"/>
        <dbReference type="ChEBI" id="CHEBI:15377"/>
        <dbReference type="ChEBI" id="CHEBI:15378"/>
        <dbReference type="ChEBI" id="CHEBI:29985"/>
        <dbReference type="ChEBI" id="CHEBI:30616"/>
        <dbReference type="ChEBI" id="CHEBI:43474"/>
        <dbReference type="ChEBI" id="CHEBI:58359"/>
        <dbReference type="ChEBI" id="CHEBI:147286"/>
        <dbReference type="ChEBI" id="CHEBI:147287"/>
        <dbReference type="ChEBI" id="CHEBI:456216"/>
        <dbReference type="EC" id="6.3.5.3"/>
    </reaction>
</comment>
<comment type="catalytic activity">
    <reaction evidence="1">
        <text>L-glutamine + H2O = L-glutamate + NH4(+)</text>
        <dbReference type="Rhea" id="RHEA:15889"/>
        <dbReference type="ChEBI" id="CHEBI:15377"/>
        <dbReference type="ChEBI" id="CHEBI:28938"/>
        <dbReference type="ChEBI" id="CHEBI:29985"/>
        <dbReference type="ChEBI" id="CHEBI:58359"/>
        <dbReference type="EC" id="3.5.1.2"/>
    </reaction>
</comment>
<comment type="pathway">
    <text evidence="1">Purine metabolism; IMP biosynthesis via de novo pathway; 5-amino-1-(5-phospho-D-ribosyl)imidazole from N(2)-formyl-N(1)-(5-phospho-D-ribosyl)glycinamide: step 1/2.</text>
</comment>
<comment type="subunit">
    <text evidence="1">Part of the FGAM synthase complex composed of 1 PurL, 1 PurQ and 2 PurS subunits.</text>
</comment>
<comment type="subcellular location">
    <subcellularLocation>
        <location evidence="1">Cytoplasm</location>
    </subcellularLocation>
</comment>
<protein>
    <recommendedName>
        <fullName evidence="1">Phosphoribosylformylglycinamidine synthase subunit PurQ</fullName>
        <shortName evidence="1">FGAM synthase</shortName>
        <ecNumber evidence="1">6.3.5.3</ecNumber>
    </recommendedName>
    <alternativeName>
        <fullName evidence="1">Formylglycinamide ribonucleotide amidotransferase subunit I</fullName>
        <shortName evidence="1">FGAR amidotransferase I</shortName>
        <shortName evidence="1">FGAR-AT I</shortName>
    </alternativeName>
    <alternativeName>
        <fullName evidence="1">Glutaminase PurQ</fullName>
        <ecNumber evidence="1">3.5.1.2</ecNumber>
    </alternativeName>
    <alternativeName>
        <fullName evidence="1">Phosphoribosylformylglycinamidine synthase subunit I</fullName>
    </alternativeName>
</protein>
<reference key="1">
    <citation type="journal article" date="2001" name="Science">
        <title>Comparative genomics of Listeria species.</title>
        <authorList>
            <person name="Glaser P."/>
            <person name="Frangeul L."/>
            <person name="Buchrieser C."/>
            <person name="Rusniok C."/>
            <person name="Amend A."/>
            <person name="Baquero F."/>
            <person name="Berche P."/>
            <person name="Bloecker H."/>
            <person name="Brandt P."/>
            <person name="Chakraborty T."/>
            <person name="Charbit A."/>
            <person name="Chetouani F."/>
            <person name="Couve E."/>
            <person name="de Daruvar A."/>
            <person name="Dehoux P."/>
            <person name="Domann E."/>
            <person name="Dominguez-Bernal G."/>
            <person name="Duchaud E."/>
            <person name="Durant L."/>
            <person name="Dussurget O."/>
            <person name="Entian K.-D."/>
            <person name="Fsihi H."/>
            <person name="Garcia-del Portillo F."/>
            <person name="Garrido P."/>
            <person name="Gautier L."/>
            <person name="Goebel W."/>
            <person name="Gomez-Lopez N."/>
            <person name="Hain T."/>
            <person name="Hauf J."/>
            <person name="Jackson D."/>
            <person name="Jones L.-M."/>
            <person name="Kaerst U."/>
            <person name="Kreft J."/>
            <person name="Kuhn M."/>
            <person name="Kunst F."/>
            <person name="Kurapkat G."/>
            <person name="Madueno E."/>
            <person name="Maitournam A."/>
            <person name="Mata Vicente J."/>
            <person name="Ng E."/>
            <person name="Nedjari H."/>
            <person name="Nordsiek G."/>
            <person name="Novella S."/>
            <person name="de Pablos B."/>
            <person name="Perez-Diaz J.-C."/>
            <person name="Purcell R."/>
            <person name="Remmel B."/>
            <person name="Rose M."/>
            <person name="Schlueter T."/>
            <person name="Simoes N."/>
            <person name="Tierrez A."/>
            <person name="Vazquez-Boland J.-A."/>
            <person name="Voss H."/>
            <person name="Wehland J."/>
            <person name="Cossart P."/>
        </authorList>
    </citation>
    <scope>NUCLEOTIDE SEQUENCE [LARGE SCALE GENOMIC DNA]</scope>
    <source>
        <strain>ATCC BAA-679 / EGD-e</strain>
    </source>
</reference>
<feature type="chain" id="PRO_0000100568" description="Phosphoribosylformylglycinamidine synthase subunit PurQ">
    <location>
        <begin position="1"/>
        <end position="227"/>
    </location>
</feature>
<feature type="domain" description="Glutamine amidotransferase type-1" evidence="1">
    <location>
        <begin position="2"/>
        <end position="226"/>
    </location>
</feature>
<feature type="active site" description="Nucleophile" evidence="1">
    <location>
        <position position="86"/>
    </location>
</feature>
<feature type="active site" evidence="1">
    <location>
        <position position="195"/>
    </location>
</feature>
<feature type="active site" evidence="1">
    <location>
        <position position="197"/>
    </location>
</feature>
<keyword id="KW-0067">ATP-binding</keyword>
<keyword id="KW-0963">Cytoplasm</keyword>
<keyword id="KW-0315">Glutamine amidotransferase</keyword>
<keyword id="KW-0378">Hydrolase</keyword>
<keyword id="KW-0436">Ligase</keyword>
<keyword id="KW-0547">Nucleotide-binding</keyword>
<keyword id="KW-0658">Purine biosynthesis</keyword>
<keyword id="KW-1185">Reference proteome</keyword>
<sequence>MKFAVIQFPGSNCDLDMLHAIRDSLGEEAEYIWHAETSLAGFDAVLLPGGFSYGDYLRTGAIAKFSSIMPEVLRFAEMGKPVLGVCNGFQILTEIGLLPGALIRNNNLHFICKTVPLRVANASTMFTELYEEGEIIQVPVAHGEGNYYCDDETLLKLKENNQIVFTYDSVNPNGSRADIAGIVNERGNVLGMMPHPERAVEEIIGGTDGLRLFESVVKAWKEEQVNA</sequence>
<organism>
    <name type="scientific">Listeria monocytogenes serovar 1/2a (strain ATCC BAA-679 / EGD-e)</name>
    <dbReference type="NCBI Taxonomy" id="169963"/>
    <lineage>
        <taxon>Bacteria</taxon>
        <taxon>Bacillati</taxon>
        <taxon>Bacillota</taxon>
        <taxon>Bacilli</taxon>
        <taxon>Bacillales</taxon>
        <taxon>Listeriaceae</taxon>
        <taxon>Listeria</taxon>
    </lineage>
</organism>